<feature type="signal peptide" evidence="2">
    <location>
        <begin position="1"/>
        <end position="24"/>
    </location>
</feature>
<feature type="chain" id="PRO_0000383340" description="Sialomucin core protein 24">
    <location>
        <begin position="25"/>
        <end position="198"/>
    </location>
</feature>
<feature type="topological domain" description="Extracellular" evidence="2">
    <location>
        <begin position="25"/>
        <end position="163"/>
    </location>
</feature>
<feature type="transmembrane region" description="Helical" evidence="2">
    <location>
        <begin position="164"/>
        <end position="184"/>
    </location>
</feature>
<feature type="topological domain" description="Cytoplasmic" evidence="2">
    <location>
        <begin position="185"/>
        <end position="198"/>
    </location>
</feature>
<feature type="region of interest" description="Disordered" evidence="3">
    <location>
        <begin position="32"/>
        <end position="54"/>
    </location>
</feature>
<feature type="region of interest" description="Disordered" evidence="3">
    <location>
        <begin position="117"/>
        <end position="152"/>
    </location>
</feature>
<feature type="region of interest" description="Required for endosomal and lysosomal localization" evidence="1">
    <location>
        <begin position="192"/>
        <end position="198"/>
    </location>
</feature>
<feature type="compositionally biased region" description="Low complexity" evidence="3">
    <location>
        <begin position="33"/>
        <end position="54"/>
    </location>
</feature>
<feature type="glycosylation site" description="N-linked (GlcNAc...) asparagine" evidence="2">
    <location>
        <position position="26"/>
    </location>
</feature>
<feature type="glycosylation site" description="N-linked (GlcNAc...) asparagine" evidence="2">
    <location>
        <position position="32"/>
    </location>
</feature>
<feature type="glycosylation site" description="N-linked (GlcNAc...) asparagine" evidence="2">
    <location>
        <position position="79"/>
    </location>
</feature>
<feature type="glycosylation site" description="N-linked (GlcNAc...) asparagine" evidence="2">
    <location>
        <position position="96"/>
    </location>
</feature>
<feature type="glycosylation site" description="N-linked (GlcNAc...) asparagine" evidence="2">
    <location>
        <position position="106"/>
    </location>
</feature>
<feature type="glycosylation site" description="N-linked (GlcNAc...) asparagine" evidence="2">
    <location>
        <position position="122"/>
    </location>
</feature>
<feature type="glycosylation site" description="N-linked (GlcNAc...) asparagine" evidence="2">
    <location>
        <position position="147"/>
    </location>
</feature>
<reference key="1">
    <citation type="submission" date="2005-11" db="EMBL/GenBank/DDBJ databases">
        <authorList>
            <consortium name="NIH - Mammalian Gene Collection (MGC) project"/>
        </authorList>
    </citation>
    <scope>NUCLEOTIDE SEQUENCE [LARGE SCALE MRNA]</scope>
    <source>
        <strain>Crossbred X Angus</strain>
        <tissue>Liver</tissue>
    </source>
</reference>
<evidence type="ECO:0000250" key="1"/>
<evidence type="ECO:0000255" key="2"/>
<evidence type="ECO:0000256" key="3">
    <source>
        <dbReference type="SAM" id="MobiDB-lite"/>
    </source>
</evidence>
<evidence type="ECO:0000305" key="4"/>
<accession>Q2YDH0</accession>
<protein>
    <recommendedName>
        <fullName>Sialomucin core protein 24</fullName>
        <shortName>MUC-24</shortName>
    </recommendedName>
    <alternativeName>
        <fullName>Endolyn</fullName>
    </alternativeName>
    <cdAntigenName>CD164</cdAntigenName>
</protein>
<comment type="function">
    <text evidence="1">Sialomucin that may play a key role in hematopoiesis. May be involved in cell adhesion. Promotes myogenesis by enhancing CXCR4-dependent cell motility. Positively regulates myoblast migration and promotes myoblast fusion into myotubes (By similarity).</text>
</comment>
<comment type="subunit">
    <text evidence="1">Interacts with CXCR4.</text>
</comment>
<comment type="subcellular location">
    <subcellularLocation>
        <location evidence="4">Lysosome membrane</location>
        <topology evidence="4">Single-pass type I membrane protein</topology>
    </subcellularLocation>
    <subcellularLocation>
        <location evidence="1">Endosome membrane</location>
        <topology evidence="1">Single-pass type I membrane protein</topology>
    </subcellularLocation>
    <subcellularLocation>
        <location evidence="1">Cell membrane</location>
        <topology evidence="1">Single-pass type I membrane protein</topology>
    </subcellularLocation>
</comment>
<comment type="PTM">
    <text evidence="1">Highly N- and O-glycosylated; contains sialic acid.</text>
</comment>
<comment type="similarity">
    <text evidence="4">Belongs to the CD164 family.</text>
</comment>
<organism>
    <name type="scientific">Bos taurus</name>
    <name type="common">Bovine</name>
    <dbReference type="NCBI Taxonomy" id="9913"/>
    <lineage>
        <taxon>Eukaryota</taxon>
        <taxon>Metazoa</taxon>
        <taxon>Chordata</taxon>
        <taxon>Craniata</taxon>
        <taxon>Vertebrata</taxon>
        <taxon>Euteleostomi</taxon>
        <taxon>Mammalia</taxon>
        <taxon>Eutheria</taxon>
        <taxon>Laurasiatheria</taxon>
        <taxon>Artiodactyla</taxon>
        <taxon>Ruminantia</taxon>
        <taxon>Pecora</taxon>
        <taxon>Bovidae</taxon>
        <taxon>Bovinae</taxon>
        <taxon>Bos</taxon>
    </lineage>
</organism>
<dbReference type="EMBL" id="BC110225">
    <property type="protein sequence ID" value="AAI10226.1"/>
    <property type="molecule type" value="mRNA"/>
</dbReference>
<dbReference type="RefSeq" id="NP_001039506.1">
    <property type="nucleotide sequence ID" value="NM_001046041.1"/>
</dbReference>
<dbReference type="SMR" id="Q2YDH0"/>
<dbReference type="FunCoup" id="Q2YDH0">
    <property type="interactions" value="620"/>
</dbReference>
<dbReference type="GlyCosmos" id="Q2YDH0">
    <property type="glycosylation" value="7 sites, No reported glycans"/>
</dbReference>
<dbReference type="GlyGen" id="Q2YDH0">
    <property type="glycosylation" value="7 sites"/>
</dbReference>
<dbReference type="PaxDb" id="9913-ENSBTAP00000023937"/>
<dbReference type="Ensembl" id="ENSBTAT00000023937.3">
    <property type="protein sequence ID" value="ENSBTAP00000023937.2"/>
    <property type="gene ID" value="ENSBTAG00000017992.5"/>
</dbReference>
<dbReference type="GeneID" id="509820"/>
<dbReference type="KEGG" id="bta:509820"/>
<dbReference type="CTD" id="8763"/>
<dbReference type="VEuPathDB" id="HostDB:ENSBTAG00000017992"/>
<dbReference type="VGNC" id="VGNC:27004">
    <property type="gene designation" value="CD164"/>
</dbReference>
<dbReference type="eggNOG" id="ENOG502S7HA">
    <property type="taxonomic scope" value="Eukaryota"/>
</dbReference>
<dbReference type="GeneTree" id="ENSGT00530000063929"/>
<dbReference type="HOGENOM" id="CLU_101414_0_0_1"/>
<dbReference type="InParanoid" id="Q2YDH0"/>
<dbReference type="OMA" id="CFWMECK"/>
<dbReference type="OrthoDB" id="6160056at2759"/>
<dbReference type="TreeFam" id="TF333380"/>
<dbReference type="Proteomes" id="UP000009136">
    <property type="component" value="Chromosome 9"/>
</dbReference>
<dbReference type="Bgee" id="ENSBTAG00000017992">
    <property type="expression patterns" value="Expressed in spermatocyte and 108 other cell types or tissues"/>
</dbReference>
<dbReference type="GO" id="GO:0005768">
    <property type="term" value="C:endosome"/>
    <property type="evidence" value="ECO:0000318"/>
    <property type="project" value="GO_Central"/>
</dbReference>
<dbReference type="GO" id="GO:0010008">
    <property type="term" value="C:endosome membrane"/>
    <property type="evidence" value="ECO:0007669"/>
    <property type="project" value="UniProtKB-SubCell"/>
</dbReference>
<dbReference type="GO" id="GO:0005765">
    <property type="term" value="C:lysosomal membrane"/>
    <property type="evidence" value="ECO:0007669"/>
    <property type="project" value="UniProtKB-SubCell"/>
</dbReference>
<dbReference type="GO" id="GO:0005764">
    <property type="term" value="C:lysosome"/>
    <property type="evidence" value="ECO:0000318"/>
    <property type="project" value="GO_Central"/>
</dbReference>
<dbReference type="GO" id="GO:0005886">
    <property type="term" value="C:plasma membrane"/>
    <property type="evidence" value="ECO:0007669"/>
    <property type="project" value="UniProtKB-SubCell"/>
</dbReference>
<dbReference type="GO" id="GO:0007157">
    <property type="term" value="P:heterophilic cell-cell adhesion via plasma membrane cell adhesion molecules"/>
    <property type="evidence" value="ECO:0007669"/>
    <property type="project" value="Ensembl"/>
</dbReference>
<dbReference type="GO" id="GO:0007517">
    <property type="term" value="P:muscle organ development"/>
    <property type="evidence" value="ECO:0007669"/>
    <property type="project" value="UniProtKB-KW"/>
</dbReference>
<dbReference type="InterPro" id="IPR007947">
    <property type="entry name" value="CD164_MGC24"/>
</dbReference>
<dbReference type="PANTHER" id="PTHR11337">
    <property type="entry name" value="MUCIN/PORIMIN"/>
    <property type="match status" value="1"/>
</dbReference>
<dbReference type="PANTHER" id="PTHR11337:SF12">
    <property type="entry name" value="SIALOMUCIN CORE PROTEIN 24"/>
    <property type="match status" value="1"/>
</dbReference>
<dbReference type="Pfam" id="PF05283">
    <property type="entry name" value="MGC-24"/>
    <property type="match status" value="1"/>
</dbReference>
<dbReference type="PRINTS" id="PR01701">
    <property type="entry name" value="CD164ANTIGEN"/>
</dbReference>
<name>MUC24_BOVIN</name>
<keyword id="KW-0130">Cell adhesion</keyword>
<keyword id="KW-1003">Cell membrane</keyword>
<keyword id="KW-0967">Endosome</keyword>
<keyword id="KW-0325">Glycoprotein</keyword>
<keyword id="KW-0458">Lysosome</keyword>
<keyword id="KW-0472">Membrane</keyword>
<keyword id="KW-0517">Myogenesis</keyword>
<keyword id="KW-1185">Reference proteome</keyword>
<keyword id="KW-0732">Signal</keyword>
<keyword id="KW-0812">Transmembrane</keyword>
<keyword id="KW-1133">Transmembrane helix</keyword>
<gene>
    <name type="primary">CD164</name>
</gene>
<proteinExistence type="evidence at transcript level"/>
<sequence length="198" mass="20347">MSGLSRPLLLAVGCLAALCVITAAGNTTLAPNVTTASSPPPTTTTVPVSPTTLSPLPVTTPAPDICGSRNSCVSCVDGNATCFWIECKGKSYCSDNSTAGDCKVVNTTGFCSVPTTTPTPTNSTAKTTTLPSTTTTSTTATTSGTTNTTLSPTIQPTRKSTFDAASFIGGIVLVLGVQAVIFFLYKFCKSKERNYHTL</sequence>